<dbReference type="EC" id="1.3.5.2"/>
<dbReference type="EMBL" id="X55636">
    <property type="protein sequence ID" value="CAA39161.1"/>
    <property type="molecule type" value="Genomic_DNA"/>
</dbReference>
<dbReference type="EMBL" id="AE006468">
    <property type="protein sequence ID" value="AAL19991.1"/>
    <property type="molecule type" value="Genomic_DNA"/>
</dbReference>
<dbReference type="PIR" id="S13824">
    <property type="entry name" value="S13824"/>
</dbReference>
<dbReference type="RefSeq" id="NP_460032.1">
    <property type="nucleotide sequence ID" value="NC_003197.2"/>
</dbReference>
<dbReference type="RefSeq" id="WP_000291723.1">
    <property type="nucleotide sequence ID" value="NC_003197.2"/>
</dbReference>
<dbReference type="SMR" id="P25468"/>
<dbReference type="STRING" id="99287.STM1058"/>
<dbReference type="PaxDb" id="99287-STM1058"/>
<dbReference type="GeneID" id="1252576"/>
<dbReference type="KEGG" id="stm:STM1058"/>
<dbReference type="PATRIC" id="fig|99287.12.peg.1122"/>
<dbReference type="HOGENOM" id="CLU_013640_2_0_6"/>
<dbReference type="OMA" id="ERIKMGA"/>
<dbReference type="PhylomeDB" id="P25468"/>
<dbReference type="BioCyc" id="SENT99287:STM1058-MONOMER"/>
<dbReference type="UniPathway" id="UPA00070">
    <property type="reaction ID" value="UER00946"/>
</dbReference>
<dbReference type="Proteomes" id="UP000001014">
    <property type="component" value="Chromosome"/>
</dbReference>
<dbReference type="GO" id="GO:0005737">
    <property type="term" value="C:cytoplasm"/>
    <property type="evidence" value="ECO:0007669"/>
    <property type="project" value="InterPro"/>
</dbReference>
<dbReference type="GO" id="GO:0005886">
    <property type="term" value="C:plasma membrane"/>
    <property type="evidence" value="ECO:0007669"/>
    <property type="project" value="UniProtKB-SubCell"/>
</dbReference>
<dbReference type="GO" id="GO:0106430">
    <property type="term" value="F:dihydroorotate dehydrogenase (quinone) activity"/>
    <property type="evidence" value="ECO:0007669"/>
    <property type="project" value="UniProtKB-EC"/>
</dbReference>
<dbReference type="GO" id="GO:0004152">
    <property type="term" value="F:dihydroorotate dehydrogenase activity"/>
    <property type="evidence" value="ECO:0000318"/>
    <property type="project" value="GO_Central"/>
</dbReference>
<dbReference type="GO" id="GO:0006207">
    <property type="term" value="P:'de novo' pyrimidine nucleobase biosynthetic process"/>
    <property type="evidence" value="ECO:0000318"/>
    <property type="project" value="GO_Central"/>
</dbReference>
<dbReference type="GO" id="GO:0044205">
    <property type="term" value="P:'de novo' UMP biosynthetic process"/>
    <property type="evidence" value="ECO:0007669"/>
    <property type="project" value="UniProtKB-UniRule"/>
</dbReference>
<dbReference type="GO" id="GO:0009220">
    <property type="term" value="P:pyrimidine ribonucleotide biosynthetic process"/>
    <property type="evidence" value="ECO:0000318"/>
    <property type="project" value="GO_Central"/>
</dbReference>
<dbReference type="CDD" id="cd04738">
    <property type="entry name" value="DHOD_2_like"/>
    <property type="match status" value="1"/>
</dbReference>
<dbReference type="FunFam" id="3.20.20.70:FF:000028">
    <property type="entry name" value="Dihydroorotate dehydrogenase (quinone)"/>
    <property type="match status" value="1"/>
</dbReference>
<dbReference type="Gene3D" id="3.20.20.70">
    <property type="entry name" value="Aldolase class I"/>
    <property type="match status" value="1"/>
</dbReference>
<dbReference type="HAMAP" id="MF_00225">
    <property type="entry name" value="DHO_dh_type2"/>
    <property type="match status" value="1"/>
</dbReference>
<dbReference type="InterPro" id="IPR013785">
    <property type="entry name" value="Aldolase_TIM"/>
</dbReference>
<dbReference type="InterPro" id="IPR050074">
    <property type="entry name" value="DHO_dehydrogenase"/>
</dbReference>
<dbReference type="InterPro" id="IPR012135">
    <property type="entry name" value="Dihydroorotate_DH_1_2"/>
</dbReference>
<dbReference type="InterPro" id="IPR005719">
    <property type="entry name" value="Dihydroorotate_DH_2"/>
</dbReference>
<dbReference type="InterPro" id="IPR005720">
    <property type="entry name" value="Dihydroorotate_DH_cat"/>
</dbReference>
<dbReference type="InterPro" id="IPR001295">
    <property type="entry name" value="Dihydroorotate_DH_CS"/>
</dbReference>
<dbReference type="NCBIfam" id="NF003644">
    <property type="entry name" value="PRK05286.1-1"/>
    <property type="match status" value="1"/>
</dbReference>
<dbReference type="NCBIfam" id="NF003645">
    <property type="entry name" value="PRK05286.1-2"/>
    <property type="match status" value="1"/>
</dbReference>
<dbReference type="NCBIfam" id="NF003646">
    <property type="entry name" value="PRK05286.1-4"/>
    <property type="match status" value="1"/>
</dbReference>
<dbReference type="NCBIfam" id="NF003652">
    <property type="entry name" value="PRK05286.2-5"/>
    <property type="match status" value="1"/>
</dbReference>
<dbReference type="NCBIfam" id="TIGR01036">
    <property type="entry name" value="pyrD_sub2"/>
    <property type="match status" value="1"/>
</dbReference>
<dbReference type="PANTHER" id="PTHR48109:SF4">
    <property type="entry name" value="DIHYDROOROTATE DEHYDROGENASE (QUINONE), MITOCHONDRIAL"/>
    <property type="match status" value="1"/>
</dbReference>
<dbReference type="PANTHER" id="PTHR48109">
    <property type="entry name" value="DIHYDROOROTATE DEHYDROGENASE (QUINONE), MITOCHONDRIAL-RELATED"/>
    <property type="match status" value="1"/>
</dbReference>
<dbReference type="Pfam" id="PF01180">
    <property type="entry name" value="DHO_dh"/>
    <property type="match status" value="1"/>
</dbReference>
<dbReference type="PIRSF" id="PIRSF000164">
    <property type="entry name" value="DHO_oxidase"/>
    <property type="match status" value="1"/>
</dbReference>
<dbReference type="SUPFAM" id="SSF51395">
    <property type="entry name" value="FMN-linked oxidoreductases"/>
    <property type="match status" value="1"/>
</dbReference>
<dbReference type="PROSITE" id="PS00911">
    <property type="entry name" value="DHODEHASE_1"/>
    <property type="match status" value="1"/>
</dbReference>
<dbReference type="PROSITE" id="PS00912">
    <property type="entry name" value="DHODEHASE_2"/>
    <property type="match status" value="1"/>
</dbReference>
<comment type="function">
    <text evidence="1">Catalyzes the conversion of dihydroorotate to orotate with quinone as electron acceptor.</text>
</comment>
<comment type="catalytic activity">
    <reaction>
        <text>(S)-dihydroorotate + a quinone = orotate + a quinol</text>
        <dbReference type="Rhea" id="RHEA:30187"/>
        <dbReference type="ChEBI" id="CHEBI:24646"/>
        <dbReference type="ChEBI" id="CHEBI:30839"/>
        <dbReference type="ChEBI" id="CHEBI:30864"/>
        <dbReference type="ChEBI" id="CHEBI:132124"/>
        <dbReference type="EC" id="1.3.5.2"/>
    </reaction>
</comment>
<comment type="cofactor">
    <cofactor evidence="1">
        <name>FMN</name>
        <dbReference type="ChEBI" id="CHEBI:58210"/>
    </cofactor>
    <text evidence="1">Binds 1 FMN per subunit.</text>
</comment>
<comment type="pathway">
    <text>Pyrimidine metabolism; UMP biosynthesis via de novo pathway; orotate from (S)-dihydroorotate (quinone route): step 1/1.</text>
</comment>
<comment type="subunit">
    <text evidence="1">Monomer.</text>
</comment>
<comment type="subcellular location">
    <subcellularLocation>
        <location evidence="1">Cell membrane</location>
        <topology evidence="1">Peripheral membrane protein</topology>
    </subcellularLocation>
</comment>
<comment type="similarity">
    <text evidence="2">Belongs to the dihydroorotate dehydrogenase family. Type 2 subfamily.</text>
</comment>
<evidence type="ECO:0000250" key="1"/>
<evidence type="ECO:0000305" key="2"/>
<feature type="chain" id="PRO_0000148474" description="Dihydroorotate dehydrogenase (quinone)">
    <location>
        <begin position="1"/>
        <end position="336"/>
    </location>
</feature>
<feature type="active site" description="Nucleophile" evidence="1">
    <location>
        <position position="175"/>
    </location>
</feature>
<feature type="binding site" evidence="1">
    <location>
        <begin position="62"/>
        <end position="66"/>
    </location>
    <ligand>
        <name>FMN</name>
        <dbReference type="ChEBI" id="CHEBI:58210"/>
    </ligand>
</feature>
<feature type="binding site" evidence="1">
    <location>
        <position position="66"/>
    </location>
    <ligand>
        <name>substrate</name>
    </ligand>
</feature>
<feature type="binding site" evidence="1">
    <location>
        <position position="86"/>
    </location>
    <ligand>
        <name>FMN</name>
        <dbReference type="ChEBI" id="CHEBI:58210"/>
    </ligand>
</feature>
<feature type="binding site" evidence="1">
    <location>
        <begin position="111"/>
        <end position="115"/>
    </location>
    <ligand>
        <name>substrate</name>
    </ligand>
</feature>
<feature type="binding site" evidence="1">
    <location>
        <position position="139"/>
    </location>
    <ligand>
        <name>FMN</name>
        <dbReference type="ChEBI" id="CHEBI:58210"/>
    </ligand>
</feature>
<feature type="binding site" evidence="1">
    <location>
        <position position="172"/>
    </location>
    <ligand>
        <name>FMN</name>
        <dbReference type="ChEBI" id="CHEBI:58210"/>
    </ligand>
</feature>
<feature type="binding site" evidence="1">
    <location>
        <position position="172"/>
    </location>
    <ligand>
        <name>substrate</name>
    </ligand>
</feature>
<feature type="binding site" evidence="1">
    <location>
        <position position="177"/>
    </location>
    <ligand>
        <name>substrate</name>
    </ligand>
</feature>
<feature type="binding site" evidence="1">
    <location>
        <position position="217"/>
    </location>
    <ligand>
        <name>FMN</name>
        <dbReference type="ChEBI" id="CHEBI:58210"/>
    </ligand>
</feature>
<feature type="binding site" evidence="1">
    <location>
        <position position="245"/>
    </location>
    <ligand>
        <name>FMN</name>
        <dbReference type="ChEBI" id="CHEBI:58210"/>
    </ligand>
</feature>
<feature type="binding site" evidence="1">
    <location>
        <begin position="246"/>
        <end position="247"/>
    </location>
    <ligand>
        <name>substrate</name>
    </ligand>
</feature>
<feature type="binding site" evidence="1">
    <location>
        <position position="268"/>
    </location>
    <ligand>
        <name>FMN</name>
        <dbReference type="ChEBI" id="CHEBI:58210"/>
    </ligand>
</feature>
<feature type="binding site" evidence="1">
    <location>
        <position position="297"/>
    </location>
    <ligand>
        <name>FMN</name>
        <dbReference type="ChEBI" id="CHEBI:58210"/>
    </ligand>
</feature>
<feature type="binding site" evidence="1">
    <location>
        <begin position="318"/>
        <end position="319"/>
    </location>
    <ligand>
        <name>FMN</name>
        <dbReference type="ChEBI" id="CHEBI:58210"/>
    </ligand>
</feature>
<gene>
    <name type="primary">pyrD</name>
    <name type="ordered locus">STM1058</name>
</gene>
<organism>
    <name type="scientific">Salmonella typhimurium (strain LT2 / SGSC1412 / ATCC 700720)</name>
    <dbReference type="NCBI Taxonomy" id="99287"/>
    <lineage>
        <taxon>Bacteria</taxon>
        <taxon>Pseudomonadati</taxon>
        <taxon>Pseudomonadota</taxon>
        <taxon>Gammaproteobacteria</taxon>
        <taxon>Enterobacterales</taxon>
        <taxon>Enterobacteriaceae</taxon>
        <taxon>Salmonella</taxon>
    </lineage>
</organism>
<accession>P25468</accession>
<name>PYRD_SALTY</name>
<sequence length="336" mass="36740">MYYPFVRKALFQLDPERAHEFTFQQLRRITGTPLEALVRQKVPTKPVTCMGLTFKNPLGLAAGLDKDGECIDALGAMGFGSLEIGTVTPRPQPGNDKPRLFRLVDAEGLINRMGFNNLGVDNLVENVKKAHFDGILGINIGKNKDTPVENGKDDYLICMEKVYAYAGYIAINISSPNTPGLRTLQYGDALDDLLTAIKNKQNDLQAIHHKYVPVAVKIAPDLCEEELIQVADSLLRHNIDGVIATNTTLDRSLVQGMKNCQQTGGLSGRPLQLKSTEIIRRLSQELKGQLPIIGVGGIDSVIAAREKIAAGATLVQIYSGFIFKGPPLIKEIVTHI</sequence>
<protein>
    <recommendedName>
        <fullName>Dihydroorotate dehydrogenase (quinone)</fullName>
        <ecNumber>1.3.5.2</ecNumber>
    </recommendedName>
    <alternativeName>
        <fullName>DHOdehase</fullName>
        <shortName>DHOD</shortName>
        <shortName>DHODase</shortName>
    </alternativeName>
    <alternativeName>
        <fullName>Dihydroorotate oxidase</fullName>
    </alternativeName>
</protein>
<proteinExistence type="inferred from homology"/>
<reference key="1">
    <citation type="journal article" date="1990" name="Eur. J. Biochem.">
        <title>Cloning, nucleotide sequence and regulation of the Salmonella typhimurium pyrD gene encoding dihydroorotate dehydrogenase.</title>
        <authorList>
            <person name="Frick M.M."/>
            <person name="Neuhard J."/>
            <person name="Kelln R.A."/>
        </authorList>
    </citation>
    <scope>NUCLEOTIDE SEQUENCE [GENOMIC DNA]</scope>
    <source>
        <strain>LT2</strain>
    </source>
</reference>
<reference key="2">
    <citation type="journal article" date="2001" name="Nature">
        <title>Complete genome sequence of Salmonella enterica serovar Typhimurium LT2.</title>
        <authorList>
            <person name="McClelland M."/>
            <person name="Sanderson K.E."/>
            <person name="Spieth J."/>
            <person name="Clifton S.W."/>
            <person name="Latreille P."/>
            <person name="Courtney L."/>
            <person name="Porwollik S."/>
            <person name="Ali J."/>
            <person name="Dante M."/>
            <person name="Du F."/>
            <person name="Hou S."/>
            <person name="Layman D."/>
            <person name="Leonard S."/>
            <person name="Nguyen C."/>
            <person name="Scott K."/>
            <person name="Holmes A."/>
            <person name="Grewal N."/>
            <person name="Mulvaney E."/>
            <person name="Ryan E."/>
            <person name="Sun H."/>
            <person name="Florea L."/>
            <person name="Miller W."/>
            <person name="Stoneking T."/>
            <person name="Nhan M."/>
            <person name="Waterston R."/>
            <person name="Wilson R.K."/>
        </authorList>
    </citation>
    <scope>NUCLEOTIDE SEQUENCE [LARGE SCALE GENOMIC DNA]</scope>
    <source>
        <strain>LT2 / SGSC1412 / ATCC 700720</strain>
    </source>
</reference>
<keyword id="KW-1003">Cell membrane</keyword>
<keyword id="KW-0285">Flavoprotein</keyword>
<keyword id="KW-0288">FMN</keyword>
<keyword id="KW-0472">Membrane</keyword>
<keyword id="KW-0560">Oxidoreductase</keyword>
<keyword id="KW-0665">Pyrimidine biosynthesis</keyword>
<keyword id="KW-1185">Reference proteome</keyword>